<protein>
    <recommendedName>
        <fullName evidence="1">Urease subunit alpha</fullName>
        <ecNumber evidence="1">3.5.1.5</ecNumber>
    </recommendedName>
    <alternativeName>
        <fullName evidence="1">Urea amidohydrolase subunit alpha</fullName>
    </alternativeName>
</protein>
<proteinExistence type="inferred from homology"/>
<accession>B5ZMP0</accession>
<gene>
    <name evidence="1" type="primary">ureC</name>
    <name type="ordered locus">Rleg2_3051</name>
</gene>
<comment type="catalytic activity">
    <reaction evidence="1">
        <text>urea + 2 H2O + H(+) = hydrogencarbonate + 2 NH4(+)</text>
        <dbReference type="Rhea" id="RHEA:20557"/>
        <dbReference type="ChEBI" id="CHEBI:15377"/>
        <dbReference type="ChEBI" id="CHEBI:15378"/>
        <dbReference type="ChEBI" id="CHEBI:16199"/>
        <dbReference type="ChEBI" id="CHEBI:17544"/>
        <dbReference type="ChEBI" id="CHEBI:28938"/>
        <dbReference type="EC" id="3.5.1.5"/>
    </reaction>
</comment>
<comment type="cofactor">
    <cofactor evidence="1">
        <name>Ni cation</name>
        <dbReference type="ChEBI" id="CHEBI:25516"/>
    </cofactor>
    <text evidence="1">Binds 2 nickel ions per subunit.</text>
</comment>
<comment type="pathway">
    <text evidence="1">Nitrogen metabolism; urea degradation; CO(2) and NH(3) from urea (urease route): step 1/1.</text>
</comment>
<comment type="subunit">
    <text evidence="1">Heterotrimer of UreA (gamma), UreB (beta) and UreC (alpha) subunits. Three heterotrimers associate to form the active enzyme.</text>
</comment>
<comment type="subcellular location">
    <subcellularLocation>
        <location evidence="1">Cytoplasm</location>
    </subcellularLocation>
</comment>
<comment type="PTM">
    <text evidence="1">Carboxylation allows a single lysine to coordinate two nickel ions.</text>
</comment>
<comment type="similarity">
    <text evidence="1">Belongs to the metallo-dependent hydrolases superfamily. Urease alpha subunit family.</text>
</comment>
<keyword id="KW-0963">Cytoplasm</keyword>
<keyword id="KW-0378">Hydrolase</keyword>
<keyword id="KW-0479">Metal-binding</keyword>
<keyword id="KW-0533">Nickel</keyword>
<keyword id="KW-1185">Reference proteome</keyword>
<name>URE1_RHILW</name>
<organism>
    <name type="scientific">Rhizobium leguminosarum bv. trifolii (strain WSM2304)</name>
    <dbReference type="NCBI Taxonomy" id="395492"/>
    <lineage>
        <taxon>Bacteria</taxon>
        <taxon>Pseudomonadati</taxon>
        <taxon>Pseudomonadota</taxon>
        <taxon>Alphaproteobacteria</taxon>
        <taxon>Hyphomicrobiales</taxon>
        <taxon>Rhizobiaceae</taxon>
        <taxon>Rhizobium/Agrobacterium group</taxon>
        <taxon>Rhizobium</taxon>
    </lineage>
</organism>
<evidence type="ECO:0000255" key="1">
    <source>
        <dbReference type="HAMAP-Rule" id="MF_01953"/>
    </source>
</evidence>
<dbReference type="EC" id="3.5.1.5" evidence="1"/>
<dbReference type="EMBL" id="CP001191">
    <property type="protein sequence ID" value="ACI56318.1"/>
    <property type="molecule type" value="Genomic_DNA"/>
</dbReference>
<dbReference type="RefSeq" id="WP_012558726.1">
    <property type="nucleotide sequence ID" value="NC_011369.1"/>
</dbReference>
<dbReference type="SMR" id="B5ZMP0"/>
<dbReference type="STRING" id="395492.Rleg2_3051"/>
<dbReference type="KEGG" id="rlt:Rleg2_3051"/>
<dbReference type="eggNOG" id="COG0804">
    <property type="taxonomic scope" value="Bacteria"/>
</dbReference>
<dbReference type="HOGENOM" id="CLU_000980_0_0_5"/>
<dbReference type="UniPathway" id="UPA00258">
    <property type="reaction ID" value="UER00370"/>
</dbReference>
<dbReference type="Proteomes" id="UP000008330">
    <property type="component" value="Chromosome"/>
</dbReference>
<dbReference type="GO" id="GO:0005737">
    <property type="term" value="C:cytoplasm"/>
    <property type="evidence" value="ECO:0007669"/>
    <property type="project" value="UniProtKB-SubCell"/>
</dbReference>
<dbReference type="GO" id="GO:0016151">
    <property type="term" value="F:nickel cation binding"/>
    <property type="evidence" value="ECO:0007669"/>
    <property type="project" value="UniProtKB-UniRule"/>
</dbReference>
<dbReference type="GO" id="GO:0009039">
    <property type="term" value="F:urease activity"/>
    <property type="evidence" value="ECO:0007669"/>
    <property type="project" value="UniProtKB-UniRule"/>
</dbReference>
<dbReference type="GO" id="GO:0043419">
    <property type="term" value="P:urea catabolic process"/>
    <property type="evidence" value="ECO:0007669"/>
    <property type="project" value="UniProtKB-UniRule"/>
</dbReference>
<dbReference type="CDD" id="cd00375">
    <property type="entry name" value="Urease_alpha"/>
    <property type="match status" value="1"/>
</dbReference>
<dbReference type="Gene3D" id="3.20.20.140">
    <property type="entry name" value="Metal-dependent hydrolases"/>
    <property type="match status" value="1"/>
</dbReference>
<dbReference type="Gene3D" id="2.30.40.10">
    <property type="entry name" value="Urease, subunit C, domain 1"/>
    <property type="match status" value="1"/>
</dbReference>
<dbReference type="HAMAP" id="MF_01953">
    <property type="entry name" value="Urease_alpha"/>
    <property type="match status" value="1"/>
</dbReference>
<dbReference type="InterPro" id="IPR006680">
    <property type="entry name" value="Amidohydro-rel"/>
</dbReference>
<dbReference type="InterPro" id="IPR011059">
    <property type="entry name" value="Metal-dep_hydrolase_composite"/>
</dbReference>
<dbReference type="InterPro" id="IPR032466">
    <property type="entry name" value="Metal_Hydrolase"/>
</dbReference>
<dbReference type="InterPro" id="IPR011612">
    <property type="entry name" value="Urease_alpha_N_dom"/>
</dbReference>
<dbReference type="InterPro" id="IPR050112">
    <property type="entry name" value="Urease_alpha_subunit"/>
</dbReference>
<dbReference type="InterPro" id="IPR017950">
    <property type="entry name" value="Urease_AS"/>
</dbReference>
<dbReference type="InterPro" id="IPR005848">
    <property type="entry name" value="Urease_asu"/>
</dbReference>
<dbReference type="InterPro" id="IPR017951">
    <property type="entry name" value="Urease_asu_c"/>
</dbReference>
<dbReference type="InterPro" id="IPR029754">
    <property type="entry name" value="Urease_Ni-bd"/>
</dbReference>
<dbReference type="NCBIfam" id="NF009685">
    <property type="entry name" value="PRK13206.1"/>
    <property type="match status" value="1"/>
</dbReference>
<dbReference type="NCBIfam" id="NF009686">
    <property type="entry name" value="PRK13207.1"/>
    <property type="match status" value="1"/>
</dbReference>
<dbReference type="NCBIfam" id="TIGR01792">
    <property type="entry name" value="urease_alph"/>
    <property type="match status" value="1"/>
</dbReference>
<dbReference type="PANTHER" id="PTHR43440">
    <property type="entry name" value="UREASE"/>
    <property type="match status" value="1"/>
</dbReference>
<dbReference type="PANTHER" id="PTHR43440:SF1">
    <property type="entry name" value="UREASE"/>
    <property type="match status" value="1"/>
</dbReference>
<dbReference type="Pfam" id="PF01979">
    <property type="entry name" value="Amidohydro_1"/>
    <property type="match status" value="1"/>
</dbReference>
<dbReference type="Pfam" id="PF00449">
    <property type="entry name" value="Urease_alpha"/>
    <property type="match status" value="1"/>
</dbReference>
<dbReference type="PRINTS" id="PR01752">
    <property type="entry name" value="UREASE"/>
</dbReference>
<dbReference type="SUPFAM" id="SSF51338">
    <property type="entry name" value="Composite domain of metallo-dependent hydrolases"/>
    <property type="match status" value="2"/>
</dbReference>
<dbReference type="SUPFAM" id="SSF51556">
    <property type="entry name" value="Metallo-dependent hydrolases"/>
    <property type="match status" value="1"/>
</dbReference>
<dbReference type="PROSITE" id="PS01120">
    <property type="entry name" value="UREASE_1"/>
    <property type="match status" value="1"/>
</dbReference>
<dbReference type="PROSITE" id="PS00145">
    <property type="entry name" value="UREASE_2"/>
    <property type="match status" value="1"/>
</dbReference>
<dbReference type="PROSITE" id="PS51368">
    <property type="entry name" value="UREASE_3"/>
    <property type="match status" value="1"/>
</dbReference>
<sequence length="570" mass="60688">MPYKISRAAYAGMFGPTTGDKVRLADTELFIEIEKDFTTYGEEVKFGGGKVIRDGMGQSQVTRADGAVDTVITNAVIVDHSGVYKADIGLKDGRIVAIGKAGNPDMQPGVNIIVGPGTEAIAAEGKIVTAGGMDSHIHFIAPQQIEEALMSGMTCMLGGGTGPAHGTLATTCTPGPWHLARMIEAADAFPMNLAFAGKGNASLPGALTEMVLAGATSLKLHEDWGTTPGAIDCCLSVADEYDVQVMIHTDTLNESGFVEDTIGAIKGRTIHAFHTEGAGGGHAPDIIKICGQPNVIPSSTNPTRPYTVNTIAEHLDMLMVCHHLSPSIPEDIAFAESRIRKETIAAEDILHDIGAFSIISSDSQAMGRVGEVAIRTWQTADKMKRQRGRLKQENGDNDNFRVRRYIAKYTINPAIAHGLSHEIGSVEVGKRADLVLWNPAFFGVKPDMVLLGGSIAAAPMGDPNASIPTPQPVHYRPMFASYGRSLTNSSVTFVSQASLDAGLKGRLGVAKQLVAVKNTRGGISKASMIHNDLTPEIEVDPETYEVRANGELLTCEPATVLPMAQRYFLF</sequence>
<reference key="1">
    <citation type="journal article" date="2010" name="Stand. Genomic Sci.">
        <title>Complete genome sequence of Rhizobium leguminosarum bv trifolii strain WSM2304, an effective microsymbiont of the South American clover Trifolium polymorphum.</title>
        <authorList>
            <person name="Reeve W."/>
            <person name="O'Hara G."/>
            <person name="Chain P."/>
            <person name="Ardley J."/>
            <person name="Brau L."/>
            <person name="Nandesena K."/>
            <person name="Tiwari R."/>
            <person name="Malfatti S."/>
            <person name="Kiss H."/>
            <person name="Lapidus A."/>
            <person name="Copeland A."/>
            <person name="Nolan M."/>
            <person name="Land M."/>
            <person name="Ivanova N."/>
            <person name="Mavromatis K."/>
            <person name="Markowitz V."/>
            <person name="Kyrpides N."/>
            <person name="Melino V."/>
            <person name="Denton M."/>
            <person name="Yates R."/>
            <person name="Howieson J."/>
        </authorList>
    </citation>
    <scope>NUCLEOTIDE SEQUENCE [LARGE SCALE GENOMIC DNA]</scope>
    <source>
        <strain>WSM2304</strain>
    </source>
</reference>
<feature type="chain" id="PRO_1000188890" description="Urease subunit alpha">
    <location>
        <begin position="1"/>
        <end position="570"/>
    </location>
</feature>
<feature type="domain" description="Urease" evidence="1">
    <location>
        <begin position="131"/>
        <end position="570"/>
    </location>
</feature>
<feature type="active site" description="Proton donor" evidence="1">
    <location>
        <position position="322"/>
    </location>
</feature>
<feature type="binding site" evidence="1">
    <location>
        <position position="136"/>
    </location>
    <ligand>
        <name>Ni(2+)</name>
        <dbReference type="ChEBI" id="CHEBI:49786"/>
        <label>1</label>
    </ligand>
</feature>
<feature type="binding site" evidence="1">
    <location>
        <position position="138"/>
    </location>
    <ligand>
        <name>Ni(2+)</name>
        <dbReference type="ChEBI" id="CHEBI:49786"/>
        <label>1</label>
    </ligand>
</feature>
<feature type="binding site" description="via carbamate group" evidence="1">
    <location>
        <position position="219"/>
    </location>
    <ligand>
        <name>Ni(2+)</name>
        <dbReference type="ChEBI" id="CHEBI:49786"/>
        <label>1</label>
    </ligand>
</feature>
<feature type="binding site" description="via carbamate group" evidence="1">
    <location>
        <position position="219"/>
    </location>
    <ligand>
        <name>Ni(2+)</name>
        <dbReference type="ChEBI" id="CHEBI:49786"/>
        <label>2</label>
    </ligand>
</feature>
<feature type="binding site" evidence="1">
    <location>
        <position position="221"/>
    </location>
    <ligand>
        <name>substrate</name>
    </ligand>
</feature>
<feature type="binding site" evidence="1">
    <location>
        <position position="248"/>
    </location>
    <ligand>
        <name>Ni(2+)</name>
        <dbReference type="ChEBI" id="CHEBI:49786"/>
        <label>2</label>
    </ligand>
</feature>
<feature type="binding site" evidence="1">
    <location>
        <position position="274"/>
    </location>
    <ligand>
        <name>Ni(2+)</name>
        <dbReference type="ChEBI" id="CHEBI:49786"/>
        <label>2</label>
    </ligand>
</feature>
<feature type="binding site" evidence="1">
    <location>
        <position position="362"/>
    </location>
    <ligand>
        <name>Ni(2+)</name>
        <dbReference type="ChEBI" id="CHEBI:49786"/>
        <label>1</label>
    </ligand>
</feature>
<feature type="modified residue" description="N6-carboxylysine" evidence="1">
    <location>
        <position position="219"/>
    </location>
</feature>